<name>CSPL2_VITVI</name>
<keyword id="KW-1003">Cell membrane</keyword>
<keyword id="KW-0472">Membrane</keyword>
<keyword id="KW-1185">Reference proteome</keyword>
<keyword id="KW-0812">Transmembrane</keyword>
<keyword id="KW-1133">Transmembrane helix</keyword>
<dbReference type="EMBL" id="FN597034">
    <property type="protein sequence ID" value="CBI21849.3"/>
    <property type="molecule type" value="Genomic_DNA"/>
</dbReference>
<dbReference type="EMBL" id="CB346086">
    <property type="status" value="NOT_ANNOTATED_CDS"/>
    <property type="molecule type" value="mRNA"/>
</dbReference>
<dbReference type="PaxDb" id="29760-VIT_12s0028g03760.t01"/>
<dbReference type="eggNOG" id="ENOG502RZXX">
    <property type="taxonomic scope" value="Eukaryota"/>
</dbReference>
<dbReference type="HOGENOM" id="CLU_066104_3_0_1"/>
<dbReference type="InParanoid" id="A7PJ32"/>
<dbReference type="OMA" id="PKFCDQI"/>
<dbReference type="OrthoDB" id="1906221at2759"/>
<dbReference type="Proteomes" id="UP000009183">
    <property type="component" value="Chromosome 12"/>
</dbReference>
<dbReference type="ExpressionAtlas" id="A7PJ32">
    <property type="expression patterns" value="baseline and differential"/>
</dbReference>
<dbReference type="GO" id="GO:0005886">
    <property type="term" value="C:plasma membrane"/>
    <property type="evidence" value="ECO:0000318"/>
    <property type="project" value="GO_Central"/>
</dbReference>
<dbReference type="InterPro" id="IPR006459">
    <property type="entry name" value="CASP/CASPL"/>
</dbReference>
<dbReference type="InterPro" id="IPR006702">
    <property type="entry name" value="CASP_dom"/>
</dbReference>
<dbReference type="InterPro" id="IPR044173">
    <property type="entry name" value="CASPL"/>
</dbReference>
<dbReference type="NCBIfam" id="TIGR01569">
    <property type="entry name" value="A_tha_TIGR01569"/>
    <property type="match status" value="1"/>
</dbReference>
<dbReference type="PANTHER" id="PTHR36488">
    <property type="entry name" value="CASP-LIKE PROTEIN 1U1"/>
    <property type="match status" value="1"/>
</dbReference>
<dbReference type="PANTHER" id="PTHR36488:SF8">
    <property type="entry name" value="CASP-LIKE PROTEIN 1U1"/>
    <property type="match status" value="1"/>
</dbReference>
<dbReference type="Pfam" id="PF04535">
    <property type="entry name" value="CASP_dom"/>
    <property type="match status" value="1"/>
</dbReference>
<protein>
    <recommendedName>
        <fullName>CASP-like protein 1C2</fullName>
        <shortName>VvCASPL1C2</shortName>
    </recommendedName>
</protein>
<sequence>MAKNTDRICFLVLRLLAFGATLSAAIVMATSHERTTYLSLSIEAKYSHTPAFKYFVIANAIGSAYSLLLLFLPSHGSLWPLVIASDVVITMFLTSSISAALSIAYVGKKGNSYAGWLPICDQVPNYCNHVTGALAAGFIGVVLYMVLLQYSIYTKCCKSSS</sequence>
<accession>A7PJ32</accession>
<accession>E0CTD4</accession>
<comment type="subunit">
    <text evidence="1">Homodimer and heterodimers.</text>
</comment>
<comment type="subcellular location">
    <subcellularLocation>
        <location evidence="1">Cell membrane</location>
        <topology evidence="1">Multi-pass membrane protein</topology>
    </subcellularLocation>
</comment>
<comment type="similarity">
    <text evidence="3">Belongs to the Casparian strip membrane proteins (CASP) family.</text>
</comment>
<gene>
    <name type="ordered locus">VIT_12s0028g03760</name>
    <name type="ORF">GSVIVT00018576001</name>
    <name type="ORF">GSVIVT01020544001</name>
    <name type="ORF">VIT_00020544001</name>
    <name type="ORF">Vv12s0028g03760</name>
</gene>
<feature type="chain" id="PRO_0000370310" description="CASP-like protein 1C2">
    <location>
        <begin position="1"/>
        <end position="161"/>
    </location>
</feature>
<feature type="topological domain" description="Cytoplasmic" evidence="2">
    <location>
        <begin position="1"/>
        <end position="7"/>
    </location>
</feature>
<feature type="transmembrane region" description="Helical" evidence="2">
    <location>
        <begin position="8"/>
        <end position="28"/>
    </location>
</feature>
<feature type="topological domain" description="Extracellular" evidence="2">
    <location>
        <begin position="29"/>
        <end position="53"/>
    </location>
</feature>
<feature type="transmembrane region" description="Helical" evidence="2">
    <location>
        <begin position="54"/>
        <end position="74"/>
    </location>
</feature>
<feature type="topological domain" description="Cytoplasmic" evidence="2">
    <location>
        <begin position="75"/>
        <end position="86"/>
    </location>
</feature>
<feature type="transmembrane region" description="Helical" evidence="2">
    <location>
        <begin position="87"/>
        <end position="107"/>
    </location>
</feature>
<feature type="topological domain" description="Extracellular" evidence="2">
    <location>
        <begin position="108"/>
        <end position="131"/>
    </location>
</feature>
<feature type="transmembrane region" description="Helical" evidence="2">
    <location>
        <begin position="132"/>
        <end position="152"/>
    </location>
</feature>
<feature type="topological domain" description="Cytoplasmic" evidence="2">
    <location>
        <begin position="153"/>
        <end position="161"/>
    </location>
</feature>
<proteinExistence type="evidence at transcript level"/>
<organism>
    <name type="scientific">Vitis vinifera</name>
    <name type="common">Grape</name>
    <dbReference type="NCBI Taxonomy" id="29760"/>
    <lineage>
        <taxon>Eukaryota</taxon>
        <taxon>Viridiplantae</taxon>
        <taxon>Streptophyta</taxon>
        <taxon>Embryophyta</taxon>
        <taxon>Tracheophyta</taxon>
        <taxon>Spermatophyta</taxon>
        <taxon>Magnoliopsida</taxon>
        <taxon>eudicotyledons</taxon>
        <taxon>Gunneridae</taxon>
        <taxon>Pentapetalae</taxon>
        <taxon>rosids</taxon>
        <taxon>Vitales</taxon>
        <taxon>Vitaceae</taxon>
        <taxon>Viteae</taxon>
        <taxon>Vitis</taxon>
    </lineage>
</organism>
<reference key="1">
    <citation type="journal article" date="2007" name="Nature">
        <title>The grapevine genome sequence suggests ancestral hexaploidization in major angiosperm phyla.</title>
        <authorList>
            <person name="Jaillon O."/>
            <person name="Aury J.-M."/>
            <person name="Noel B."/>
            <person name="Policriti A."/>
            <person name="Clepet C."/>
            <person name="Casagrande A."/>
            <person name="Choisne N."/>
            <person name="Aubourg S."/>
            <person name="Vitulo N."/>
            <person name="Jubin C."/>
            <person name="Vezzi A."/>
            <person name="Legeai F."/>
            <person name="Hugueney P."/>
            <person name="Dasilva C."/>
            <person name="Horner D."/>
            <person name="Mica E."/>
            <person name="Jublot D."/>
            <person name="Poulain J."/>
            <person name="Bruyere C."/>
            <person name="Billault A."/>
            <person name="Segurens B."/>
            <person name="Gouyvenoux M."/>
            <person name="Ugarte E."/>
            <person name="Cattonaro F."/>
            <person name="Anthouard V."/>
            <person name="Vico V."/>
            <person name="Del Fabbro C."/>
            <person name="Alaux M."/>
            <person name="Di Gaspero G."/>
            <person name="Dumas V."/>
            <person name="Felice N."/>
            <person name="Paillard S."/>
            <person name="Juman I."/>
            <person name="Moroldo M."/>
            <person name="Scalabrin S."/>
            <person name="Canaguier A."/>
            <person name="Le Clainche I."/>
            <person name="Malacrida G."/>
            <person name="Durand E."/>
            <person name="Pesole G."/>
            <person name="Laucou V."/>
            <person name="Chatelet P."/>
            <person name="Merdinoglu D."/>
            <person name="Delledonne M."/>
            <person name="Pezzotti M."/>
            <person name="Lecharny A."/>
            <person name="Scarpelli C."/>
            <person name="Artiguenave F."/>
            <person name="Pe M.E."/>
            <person name="Valle G."/>
            <person name="Morgante M."/>
            <person name="Caboche M."/>
            <person name="Adam-Blondon A.-F."/>
            <person name="Weissenbach J."/>
            <person name="Quetier F."/>
            <person name="Wincker P."/>
        </authorList>
    </citation>
    <scope>NUCLEOTIDE SEQUENCE [LARGE SCALE GENOMIC DNA]</scope>
    <source>
        <strain>cv. Pinot noir / PN40024</strain>
    </source>
</reference>
<reference key="2">
    <citation type="submission" date="2003-03" db="EMBL/GenBank/DDBJ databases">
        <title>Expressed sequence tags from cabernet sauvignon berries at various developmental stages.</title>
        <authorList>
            <person name="Goes da Silva F."/>
            <person name="Iandolino A."/>
            <person name="Lim H."/>
            <person name="Baek J."/>
            <person name="Jones K."/>
            <person name="Cook D."/>
        </authorList>
    </citation>
    <scope>NUCLEOTIDE SEQUENCE [LARGE SCALE MRNA]</scope>
    <source>
        <strain>cv. Cabernet Sauvignon</strain>
    </source>
</reference>
<reference key="3">
    <citation type="journal article" date="2014" name="Plant Physiol.">
        <title>Functional and evolutionary analysis of the CASPARIAN STRIP MEMBRANE DOMAIN PROTEIN family.</title>
        <authorList>
            <person name="Roppolo D."/>
            <person name="Boeckmann B."/>
            <person name="Pfister A."/>
            <person name="Boutet E."/>
            <person name="Rubio M.C."/>
            <person name="Denervaud-Tendon V."/>
            <person name="Vermeer J.E."/>
            <person name="Gheyselinck J."/>
            <person name="Xenarios I."/>
            <person name="Geldner N."/>
        </authorList>
    </citation>
    <scope>GENE FAMILY</scope>
    <scope>NOMENCLATURE</scope>
</reference>
<evidence type="ECO:0000250" key="1"/>
<evidence type="ECO:0000255" key="2"/>
<evidence type="ECO:0000305" key="3"/>